<keyword id="KW-0064">Aspartyl protease</keyword>
<keyword id="KW-0997">Cell inner membrane</keyword>
<keyword id="KW-1003">Cell membrane</keyword>
<keyword id="KW-0378">Hydrolase</keyword>
<keyword id="KW-0472">Membrane</keyword>
<keyword id="KW-0645">Protease</keyword>
<keyword id="KW-0812">Transmembrane</keyword>
<keyword id="KW-1133">Transmembrane helix</keyword>
<organism>
    <name type="scientific">Escherichia coli O9:H4 (strain HS)</name>
    <dbReference type="NCBI Taxonomy" id="331112"/>
    <lineage>
        <taxon>Bacteria</taxon>
        <taxon>Pseudomonadati</taxon>
        <taxon>Pseudomonadota</taxon>
        <taxon>Gammaproteobacteria</taxon>
        <taxon>Enterobacterales</taxon>
        <taxon>Enterobacteriaceae</taxon>
        <taxon>Escherichia</taxon>
    </lineage>
</organism>
<comment type="function">
    <text evidence="1">This protein specifically catalyzes the removal of signal peptides from prolipoproteins.</text>
</comment>
<comment type="catalytic activity">
    <reaction evidence="1">
        <text>Release of signal peptides from bacterial membrane prolipoproteins. Hydrolyzes -Xaa-Yaa-Zaa-|-(S,diacylglyceryl)Cys-, in which Xaa is hydrophobic (preferably Leu), and Yaa (Ala or Ser) and Zaa (Gly or Ala) have small, neutral side chains.</text>
        <dbReference type="EC" id="3.4.23.36"/>
    </reaction>
</comment>
<comment type="pathway">
    <text evidence="1">Protein modification; lipoprotein biosynthesis (signal peptide cleavage).</text>
</comment>
<comment type="subcellular location">
    <subcellularLocation>
        <location evidence="1">Cell inner membrane</location>
        <topology evidence="1">Multi-pass membrane protein</topology>
    </subcellularLocation>
</comment>
<comment type="similarity">
    <text evidence="1">Belongs to the peptidase A8 family.</text>
</comment>
<accession>A7ZVX5</accession>
<dbReference type="EC" id="3.4.23.36" evidence="1"/>
<dbReference type="EMBL" id="CP000802">
    <property type="protein sequence ID" value="ABV04429.1"/>
    <property type="molecule type" value="Genomic_DNA"/>
</dbReference>
<dbReference type="RefSeq" id="WP_000083369.1">
    <property type="nucleotide sequence ID" value="NC_009800.1"/>
</dbReference>
<dbReference type="SMR" id="A7ZVX5"/>
<dbReference type="MEROPS" id="A08.001"/>
<dbReference type="GeneID" id="75169926"/>
<dbReference type="KEGG" id="ecx:EcHS_A0029"/>
<dbReference type="HOGENOM" id="CLU_083252_4_0_6"/>
<dbReference type="UniPathway" id="UPA00665"/>
<dbReference type="GO" id="GO:0005886">
    <property type="term" value="C:plasma membrane"/>
    <property type="evidence" value="ECO:0007669"/>
    <property type="project" value="UniProtKB-SubCell"/>
</dbReference>
<dbReference type="GO" id="GO:0004190">
    <property type="term" value="F:aspartic-type endopeptidase activity"/>
    <property type="evidence" value="ECO:0007669"/>
    <property type="project" value="UniProtKB-UniRule"/>
</dbReference>
<dbReference type="GO" id="GO:0006508">
    <property type="term" value="P:proteolysis"/>
    <property type="evidence" value="ECO:0007669"/>
    <property type="project" value="UniProtKB-KW"/>
</dbReference>
<dbReference type="HAMAP" id="MF_00161">
    <property type="entry name" value="LspA"/>
    <property type="match status" value="1"/>
</dbReference>
<dbReference type="InterPro" id="IPR001872">
    <property type="entry name" value="Peptidase_A8"/>
</dbReference>
<dbReference type="NCBIfam" id="TIGR00077">
    <property type="entry name" value="lspA"/>
    <property type="match status" value="1"/>
</dbReference>
<dbReference type="PANTHER" id="PTHR33695">
    <property type="entry name" value="LIPOPROTEIN SIGNAL PEPTIDASE"/>
    <property type="match status" value="1"/>
</dbReference>
<dbReference type="PANTHER" id="PTHR33695:SF1">
    <property type="entry name" value="LIPOPROTEIN SIGNAL PEPTIDASE"/>
    <property type="match status" value="1"/>
</dbReference>
<dbReference type="Pfam" id="PF01252">
    <property type="entry name" value="Peptidase_A8"/>
    <property type="match status" value="1"/>
</dbReference>
<dbReference type="PRINTS" id="PR00781">
    <property type="entry name" value="LIPOSIGPTASE"/>
</dbReference>
<dbReference type="PROSITE" id="PS00855">
    <property type="entry name" value="SPASE_II"/>
    <property type="match status" value="1"/>
</dbReference>
<evidence type="ECO:0000255" key="1">
    <source>
        <dbReference type="HAMAP-Rule" id="MF_00161"/>
    </source>
</evidence>
<protein>
    <recommendedName>
        <fullName evidence="1">Lipoprotein signal peptidase</fullName>
        <ecNumber evidence="1">3.4.23.36</ecNumber>
    </recommendedName>
    <alternativeName>
        <fullName evidence="1">Prolipoprotein signal peptidase</fullName>
    </alternativeName>
    <alternativeName>
        <fullName evidence="1">Signal peptidase II</fullName>
        <shortName evidence="1">SPase II</shortName>
    </alternativeName>
</protein>
<proteinExistence type="inferred from homology"/>
<feature type="chain" id="PRO_1000058235" description="Lipoprotein signal peptidase">
    <location>
        <begin position="1"/>
        <end position="164"/>
    </location>
</feature>
<feature type="transmembrane region" description="Helical" evidence="1">
    <location>
        <begin position="12"/>
        <end position="32"/>
    </location>
</feature>
<feature type="transmembrane region" description="Helical" evidence="1">
    <location>
        <begin position="70"/>
        <end position="90"/>
    </location>
</feature>
<feature type="transmembrane region" description="Helical" evidence="1">
    <location>
        <begin position="102"/>
        <end position="122"/>
    </location>
</feature>
<feature type="transmembrane region" description="Helical" evidence="1">
    <location>
        <begin position="137"/>
        <end position="157"/>
    </location>
</feature>
<feature type="active site" evidence="1">
    <location>
        <position position="123"/>
    </location>
</feature>
<feature type="active site" evidence="1">
    <location>
        <position position="141"/>
    </location>
</feature>
<name>LSPA_ECOHS</name>
<reference key="1">
    <citation type="journal article" date="2008" name="J. Bacteriol.">
        <title>The pangenome structure of Escherichia coli: comparative genomic analysis of E. coli commensal and pathogenic isolates.</title>
        <authorList>
            <person name="Rasko D.A."/>
            <person name="Rosovitz M.J."/>
            <person name="Myers G.S.A."/>
            <person name="Mongodin E.F."/>
            <person name="Fricke W.F."/>
            <person name="Gajer P."/>
            <person name="Crabtree J."/>
            <person name="Sebaihia M."/>
            <person name="Thomson N.R."/>
            <person name="Chaudhuri R."/>
            <person name="Henderson I.R."/>
            <person name="Sperandio V."/>
            <person name="Ravel J."/>
        </authorList>
    </citation>
    <scope>NUCLEOTIDE SEQUENCE [LARGE SCALE GENOMIC DNA]</scope>
    <source>
        <strain>HS</strain>
    </source>
</reference>
<sequence>MSQSICSTGLRWLWLVVVVLIIDLGSKYLILQNFALGDTVPLFPSLNLHYARNYGAAFSFLADSGGWQRWFFAGIAIGISVILAVMMYRSKATQKLNNIAYALIIGGALGNLFDRLWHGFVVDMIDFYVGDWHFATFNLADTAICVGAALIVLEGFLPSKAKKQ</sequence>
<gene>
    <name evidence="1" type="primary">lspA</name>
    <name type="ordered locus">EcHS_A0029</name>
</gene>